<feature type="chain" id="PRO_0000242610" description="UDP-N-acetylmuramate--L-alanine ligase">
    <location>
        <begin position="1"/>
        <end position="480"/>
    </location>
</feature>
<feature type="binding site" evidence="1">
    <location>
        <begin position="129"/>
        <end position="135"/>
    </location>
    <ligand>
        <name>ATP</name>
        <dbReference type="ChEBI" id="CHEBI:30616"/>
    </ligand>
</feature>
<protein>
    <recommendedName>
        <fullName evidence="1">UDP-N-acetylmuramate--L-alanine ligase</fullName>
        <ecNumber evidence="1">6.3.2.8</ecNumber>
    </recommendedName>
    <alternativeName>
        <fullName evidence="1">UDP-N-acetylmuramoyl-L-alanine synthetase</fullName>
    </alternativeName>
</protein>
<dbReference type="EC" id="6.3.2.8" evidence="1"/>
<dbReference type="EMBL" id="CP000252">
    <property type="protein sequence ID" value="ABC76561.1"/>
    <property type="molecule type" value="Genomic_DNA"/>
</dbReference>
<dbReference type="SMR" id="Q2LR47"/>
<dbReference type="FunCoup" id="Q2LR47">
    <property type="interactions" value="296"/>
</dbReference>
<dbReference type="STRING" id="56780.SYN_01747"/>
<dbReference type="KEGG" id="sat:SYN_01747"/>
<dbReference type="eggNOG" id="COG0773">
    <property type="taxonomic scope" value="Bacteria"/>
</dbReference>
<dbReference type="HOGENOM" id="CLU_028104_2_2_7"/>
<dbReference type="InParanoid" id="Q2LR47"/>
<dbReference type="OrthoDB" id="9804126at2"/>
<dbReference type="UniPathway" id="UPA00219"/>
<dbReference type="Proteomes" id="UP000001933">
    <property type="component" value="Chromosome"/>
</dbReference>
<dbReference type="GO" id="GO:0005737">
    <property type="term" value="C:cytoplasm"/>
    <property type="evidence" value="ECO:0007669"/>
    <property type="project" value="UniProtKB-SubCell"/>
</dbReference>
<dbReference type="GO" id="GO:0005524">
    <property type="term" value="F:ATP binding"/>
    <property type="evidence" value="ECO:0007669"/>
    <property type="project" value="UniProtKB-UniRule"/>
</dbReference>
<dbReference type="GO" id="GO:0008763">
    <property type="term" value="F:UDP-N-acetylmuramate-L-alanine ligase activity"/>
    <property type="evidence" value="ECO:0007669"/>
    <property type="project" value="UniProtKB-UniRule"/>
</dbReference>
<dbReference type="GO" id="GO:0051301">
    <property type="term" value="P:cell division"/>
    <property type="evidence" value="ECO:0007669"/>
    <property type="project" value="UniProtKB-KW"/>
</dbReference>
<dbReference type="GO" id="GO:0071555">
    <property type="term" value="P:cell wall organization"/>
    <property type="evidence" value="ECO:0007669"/>
    <property type="project" value="UniProtKB-KW"/>
</dbReference>
<dbReference type="GO" id="GO:0009252">
    <property type="term" value="P:peptidoglycan biosynthetic process"/>
    <property type="evidence" value="ECO:0007669"/>
    <property type="project" value="UniProtKB-UniRule"/>
</dbReference>
<dbReference type="GO" id="GO:0008360">
    <property type="term" value="P:regulation of cell shape"/>
    <property type="evidence" value="ECO:0007669"/>
    <property type="project" value="UniProtKB-KW"/>
</dbReference>
<dbReference type="Gene3D" id="3.90.190.20">
    <property type="entry name" value="Mur ligase, C-terminal domain"/>
    <property type="match status" value="1"/>
</dbReference>
<dbReference type="Gene3D" id="3.40.1190.10">
    <property type="entry name" value="Mur-like, catalytic domain"/>
    <property type="match status" value="1"/>
</dbReference>
<dbReference type="Gene3D" id="3.40.50.720">
    <property type="entry name" value="NAD(P)-binding Rossmann-like Domain"/>
    <property type="match status" value="1"/>
</dbReference>
<dbReference type="HAMAP" id="MF_00046">
    <property type="entry name" value="MurC"/>
    <property type="match status" value="1"/>
</dbReference>
<dbReference type="InterPro" id="IPR036565">
    <property type="entry name" value="Mur-like_cat_sf"/>
</dbReference>
<dbReference type="InterPro" id="IPR004101">
    <property type="entry name" value="Mur_ligase_C"/>
</dbReference>
<dbReference type="InterPro" id="IPR036615">
    <property type="entry name" value="Mur_ligase_C_dom_sf"/>
</dbReference>
<dbReference type="InterPro" id="IPR013221">
    <property type="entry name" value="Mur_ligase_cen"/>
</dbReference>
<dbReference type="InterPro" id="IPR000713">
    <property type="entry name" value="Mur_ligase_N"/>
</dbReference>
<dbReference type="InterPro" id="IPR050061">
    <property type="entry name" value="MurCDEF_pg_biosynth"/>
</dbReference>
<dbReference type="InterPro" id="IPR005758">
    <property type="entry name" value="UDP-N-AcMur_Ala_ligase_MurC"/>
</dbReference>
<dbReference type="NCBIfam" id="TIGR01082">
    <property type="entry name" value="murC"/>
    <property type="match status" value="1"/>
</dbReference>
<dbReference type="PANTHER" id="PTHR43445:SF3">
    <property type="entry name" value="UDP-N-ACETYLMURAMATE--L-ALANINE LIGASE"/>
    <property type="match status" value="1"/>
</dbReference>
<dbReference type="PANTHER" id="PTHR43445">
    <property type="entry name" value="UDP-N-ACETYLMURAMATE--L-ALANINE LIGASE-RELATED"/>
    <property type="match status" value="1"/>
</dbReference>
<dbReference type="Pfam" id="PF01225">
    <property type="entry name" value="Mur_ligase"/>
    <property type="match status" value="1"/>
</dbReference>
<dbReference type="Pfam" id="PF02875">
    <property type="entry name" value="Mur_ligase_C"/>
    <property type="match status" value="1"/>
</dbReference>
<dbReference type="Pfam" id="PF08245">
    <property type="entry name" value="Mur_ligase_M"/>
    <property type="match status" value="1"/>
</dbReference>
<dbReference type="SUPFAM" id="SSF51984">
    <property type="entry name" value="MurCD N-terminal domain"/>
    <property type="match status" value="1"/>
</dbReference>
<dbReference type="SUPFAM" id="SSF53623">
    <property type="entry name" value="MurD-like peptide ligases, catalytic domain"/>
    <property type="match status" value="1"/>
</dbReference>
<dbReference type="SUPFAM" id="SSF53244">
    <property type="entry name" value="MurD-like peptide ligases, peptide-binding domain"/>
    <property type="match status" value="1"/>
</dbReference>
<name>MURC_SYNAS</name>
<gene>
    <name evidence="1" type="primary">murC</name>
    <name type="ordered locus">SYNAS_06820</name>
    <name type="ORF">SYN_01747</name>
</gene>
<reference key="1">
    <citation type="journal article" date="2007" name="Proc. Natl. Acad. Sci. U.S.A.">
        <title>The genome of Syntrophus aciditrophicus: life at the thermodynamic limit of microbial growth.</title>
        <authorList>
            <person name="McInerney M.J."/>
            <person name="Rohlin L."/>
            <person name="Mouttaki H."/>
            <person name="Kim U."/>
            <person name="Krupp R.S."/>
            <person name="Rios-Hernandez L."/>
            <person name="Sieber J."/>
            <person name="Struchtemeyer C.G."/>
            <person name="Bhattacharyya A."/>
            <person name="Campbell J.W."/>
            <person name="Gunsalus R.P."/>
        </authorList>
    </citation>
    <scope>NUCLEOTIDE SEQUENCE [LARGE SCALE GENOMIC DNA]</scope>
    <source>
        <strain>SB</strain>
    </source>
</reference>
<keyword id="KW-0067">ATP-binding</keyword>
<keyword id="KW-0131">Cell cycle</keyword>
<keyword id="KW-0132">Cell division</keyword>
<keyword id="KW-0133">Cell shape</keyword>
<keyword id="KW-0961">Cell wall biogenesis/degradation</keyword>
<keyword id="KW-0963">Cytoplasm</keyword>
<keyword id="KW-0436">Ligase</keyword>
<keyword id="KW-0547">Nucleotide-binding</keyword>
<keyword id="KW-0573">Peptidoglycan synthesis</keyword>
<keyword id="KW-1185">Reference proteome</keyword>
<sequence>MRGMPLNSMKLFRITDVMRRKVRHIHFVGIGGIGMSGIAEVLLNLGYTVSGSDLRTSDTTEHLSSLGATVFQGHKASNLTDVDVVVTSTAVRKDNPEVLEAHRRSVPVIPRAEMLAELLKMKVSIAVSGSHGKTTTTSMIATVMASGGLDPTMVIGGKLGSIGSNARMGHGEFIVAEADESDGSFLKLSPSLAVITNIDREHLDFYRGIEDIKDAFLQFANIVPFYGSAVLCLDDPHIKTILSDIKRKTITYGMEPAADYRAQELRFNGAVTEYELYYRTECLGSVTLSVPGMFNVYNSLATVAVARELDMTFPDIQQGLKSYVGVGRRLEVKGKIAGVTVVDDYGHHPTEISATLAAARQVWKNRMIVVFQPHRYTRTQALFREFLGAFTEADLLIVTDIYPASEDPIEGVTAEALCDGIRSLTRREVRYIPNFSDITDYLMTVVQPGDTVITQGAGSVNSVGVSLLSRLKEVEDSRAA</sequence>
<organism>
    <name type="scientific">Syntrophus aciditrophicus (strain SB)</name>
    <dbReference type="NCBI Taxonomy" id="56780"/>
    <lineage>
        <taxon>Bacteria</taxon>
        <taxon>Pseudomonadati</taxon>
        <taxon>Thermodesulfobacteriota</taxon>
        <taxon>Syntrophia</taxon>
        <taxon>Syntrophales</taxon>
        <taxon>Syntrophaceae</taxon>
        <taxon>Syntrophus</taxon>
    </lineage>
</organism>
<comment type="function">
    <text evidence="1">Cell wall formation.</text>
</comment>
<comment type="catalytic activity">
    <reaction evidence="1">
        <text>UDP-N-acetyl-alpha-D-muramate + L-alanine + ATP = UDP-N-acetyl-alpha-D-muramoyl-L-alanine + ADP + phosphate + H(+)</text>
        <dbReference type="Rhea" id="RHEA:23372"/>
        <dbReference type="ChEBI" id="CHEBI:15378"/>
        <dbReference type="ChEBI" id="CHEBI:30616"/>
        <dbReference type="ChEBI" id="CHEBI:43474"/>
        <dbReference type="ChEBI" id="CHEBI:57972"/>
        <dbReference type="ChEBI" id="CHEBI:70757"/>
        <dbReference type="ChEBI" id="CHEBI:83898"/>
        <dbReference type="ChEBI" id="CHEBI:456216"/>
        <dbReference type="EC" id="6.3.2.8"/>
    </reaction>
</comment>
<comment type="pathway">
    <text evidence="1">Cell wall biogenesis; peptidoglycan biosynthesis.</text>
</comment>
<comment type="subcellular location">
    <subcellularLocation>
        <location evidence="1">Cytoplasm</location>
    </subcellularLocation>
</comment>
<comment type="similarity">
    <text evidence="1">Belongs to the MurCDEF family.</text>
</comment>
<proteinExistence type="inferred from homology"/>
<evidence type="ECO:0000255" key="1">
    <source>
        <dbReference type="HAMAP-Rule" id="MF_00046"/>
    </source>
</evidence>
<accession>Q2LR47</accession>